<feature type="chain" id="PRO_1000011382" description="3-methyl-2-oxobutanoate hydroxymethyltransferase">
    <location>
        <begin position="1"/>
        <end position="264"/>
    </location>
</feature>
<feature type="active site" description="Proton acceptor" evidence="1">
    <location>
        <position position="178"/>
    </location>
</feature>
<feature type="binding site" evidence="1">
    <location>
        <begin position="41"/>
        <end position="42"/>
    </location>
    <ligand>
        <name>3-methyl-2-oxobutanoate</name>
        <dbReference type="ChEBI" id="CHEBI:11851"/>
    </ligand>
</feature>
<feature type="binding site" evidence="1">
    <location>
        <position position="41"/>
    </location>
    <ligand>
        <name>Mg(2+)</name>
        <dbReference type="ChEBI" id="CHEBI:18420"/>
    </ligand>
</feature>
<feature type="binding site" evidence="1">
    <location>
        <position position="80"/>
    </location>
    <ligand>
        <name>3-methyl-2-oxobutanoate</name>
        <dbReference type="ChEBI" id="CHEBI:11851"/>
    </ligand>
</feature>
<feature type="binding site" evidence="1">
    <location>
        <position position="80"/>
    </location>
    <ligand>
        <name>Mg(2+)</name>
        <dbReference type="ChEBI" id="CHEBI:18420"/>
    </ligand>
</feature>
<feature type="binding site" evidence="1">
    <location>
        <position position="109"/>
    </location>
    <ligand>
        <name>3-methyl-2-oxobutanoate</name>
        <dbReference type="ChEBI" id="CHEBI:11851"/>
    </ligand>
</feature>
<feature type="binding site" evidence="1">
    <location>
        <position position="111"/>
    </location>
    <ligand>
        <name>Mg(2+)</name>
        <dbReference type="ChEBI" id="CHEBI:18420"/>
    </ligand>
</feature>
<comment type="function">
    <text evidence="1">Catalyzes the reversible reaction in which hydroxymethyl group from 5,10-methylenetetrahydrofolate is transferred onto alpha-ketoisovalerate to form ketopantoate.</text>
</comment>
<comment type="catalytic activity">
    <reaction evidence="1">
        <text>3-methyl-2-oxobutanoate + (6R)-5,10-methylene-5,6,7,8-tetrahydrofolate + H2O = 2-dehydropantoate + (6S)-5,6,7,8-tetrahydrofolate</text>
        <dbReference type="Rhea" id="RHEA:11824"/>
        <dbReference type="ChEBI" id="CHEBI:11561"/>
        <dbReference type="ChEBI" id="CHEBI:11851"/>
        <dbReference type="ChEBI" id="CHEBI:15377"/>
        <dbReference type="ChEBI" id="CHEBI:15636"/>
        <dbReference type="ChEBI" id="CHEBI:57453"/>
        <dbReference type="EC" id="2.1.2.11"/>
    </reaction>
</comment>
<comment type="cofactor">
    <cofactor evidence="1">
        <name>Mg(2+)</name>
        <dbReference type="ChEBI" id="CHEBI:18420"/>
    </cofactor>
    <text evidence="1">Binds 1 Mg(2+) ion per subunit.</text>
</comment>
<comment type="pathway">
    <text evidence="1">Cofactor biosynthesis; (R)-pantothenate biosynthesis; (R)-pantoate from 3-methyl-2-oxobutanoate: step 1/2.</text>
</comment>
<comment type="subunit">
    <text evidence="1">Homodecamer; pentamer of dimers.</text>
</comment>
<comment type="subcellular location">
    <subcellularLocation>
        <location evidence="1">Cytoplasm</location>
    </subcellularLocation>
</comment>
<comment type="similarity">
    <text evidence="1">Belongs to the PanB family.</text>
</comment>
<organism>
    <name type="scientific">Thermosipho melanesiensis (strain DSM 12029 / CIP 104789 / BI429)</name>
    <dbReference type="NCBI Taxonomy" id="391009"/>
    <lineage>
        <taxon>Bacteria</taxon>
        <taxon>Thermotogati</taxon>
        <taxon>Thermotogota</taxon>
        <taxon>Thermotogae</taxon>
        <taxon>Thermotogales</taxon>
        <taxon>Fervidobacteriaceae</taxon>
        <taxon>Thermosipho</taxon>
    </lineage>
</organism>
<name>PANB_THEM4</name>
<dbReference type="EC" id="2.1.2.11" evidence="1"/>
<dbReference type="EMBL" id="CP000716">
    <property type="protein sequence ID" value="ABR31156.1"/>
    <property type="molecule type" value="Genomic_DNA"/>
</dbReference>
<dbReference type="RefSeq" id="WP_012057515.1">
    <property type="nucleotide sequence ID" value="NC_009616.1"/>
</dbReference>
<dbReference type="SMR" id="A6LMK5"/>
<dbReference type="STRING" id="391009.Tmel_1307"/>
<dbReference type="KEGG" id="tme:Tmel_1307"/>
<dbReference type="eggNOG" id="COG0413">
    <property type="taxonomic scope" value="Bacteria"/>
</dbReference>
<dbReference type="HOGENOM" id="CLU_036645_1_0_0"/>
<dbReference type="OrthoDB" id="9781789at2"/>
<dbReference type="UniPathway" id="UPA00028">
    <property type="reaction ID" value="UER00003"/>
</dbReference>
<dbReference type="Proteomes" id="UP000001110">
    <property type="component" value="Chromosome"/>
</dbReference>
<dbReference type="GO" id="GO:0005737">
    <property type="term" value="C:cytoplasm"/>
    <property type="evidence" value="ECO:0007669"/>
    <property type="project" value="UniProtKB-SubCell"/>
</dbReference>
<dbReference type="GO" id="GO:0003864">
    <property type="term" value="F:3-methyl-2-oxobutanoate hydroxymethyltransferase activity"/>
    <property type="evidence" value="ECO:0007669"/>
    <property type="project" value="UniProtKB-UniRule"/>
</dbReference>
<dbReference type="GO" id="GO:0000287">
    <property type="term" value="F:magnesium ion binding"/>
    <property type="evidence" value="ECO:0007669"/>
    <property type="project" value="TreeGrafter"/>
</dbReference>
<dbReference type="GO" id="GO:0015940">
    <property type="term" value="P:pantothenate biosynthetic process"/>
    <property type="evidence" value="ECO:0007669"/>
    <property type="project" value="UniProtKB-UniRule"/>
</dbReference>
<dbReference type="CDD" id="cd06557">
    <property type="entry name" value="KPHMT-like"/>
    <property type="match status" value="1"/>
</dbReference>
<dbReference type="FunFam" id="3.20.20.60:FF:000003">
    <property type="entry name" value="3-methyl-2-oxobutanoate hydroxymethyltransferase"/>
    <property type="match status" value="1"/>
</dbReference>
<dbReference type="Gene3D" id="3.20.20.60">
    <property type="entry name" value="Phosphoenolpyruvate-binding domains"/>
    <property type="match status" value="1"/>
</dbReference>
<dbReference type="HAMAP" id="MF_00156">
    <property type="entry name" value="PanB"/>
    <property type="match status" value="1"/>
</dbReference>
<dbReference type="InterPro" id="IPR003700">
    <property type="entry name" value="Pantoate_hydroxy_MeTrfase"/>
</dbReference>
<dbReference type="InterPro" id="IPR015813">
    <property type="entry name" value="Pyrv/PenolPyrv_kinase-like_dom"/>
</dbReference>
<dbReference type="InterPro" id="IPR040442">
    <property type="entry name" value="Pyrv_kinase-like_dom_sf"/>
</dbReference>
<dbReference type="NCBIfam" id="TIGR00222">
    <property type="entry name" value="panB"/>
    <property type="match status" value="1"/>
</dbReference>
<dbReference type="NCBIfam" id="NF001452">
    <property type="entry name" value="PRK00311.1"/>
    <property type="match status" value="1"/>
</dbReference>
<dbReference type="PANTHER" id="PTHR20881">
    <property type="entry name" value="3-METHYL-2-OXOBUTANOATE HYDROXYMETHYLTRANSFERASE"/>
    <property type="match status" value="1"/>
</dbReference>
<dbReference type="PANTHER" id="PTHR20881:SF0">
    <property type="entry name" value="3-METHYL-2-OXOBUTANOATE HYDROXYMETHYLTRANSFERASE"/>
    <property type="match status" value="1"/>
</dbReference>
<dbReference type="Pfam" id="PF02548">
    <property type="entry name" value="Pantoate_transf"/>
    <property type="match status" value="1"/>
</dbReference>
<dbReference type="PIRSF" id="PIRSF000388">
    <property type="entry name" value="Pantoate_hydroxy_MeTrfase"/>
    <property type="match status" value="1"/>
</dbReference>
<dbReference type="SUPFAM" id="SSF51621">
    <property type="entry name" value="Phosphoenolpyruvate/pyruvate domain"/>
    <property type="match status" value="1"/>
</dbReference>
<sequence length="264" mass="28937">MTIQKFLAMKGKEKIVMVTAYDTPTAKIAEEAGVDIILIGDSIGNNVLGYDSTIPVTMEEIIIHLKAVRRGAPNSFIVADMPFLSYGHSIEEAVKNAGILIKNGANAVKIEGGKFHCNLIEKCINIGIPVMGHLGFTPQSINIFGGYKVQGKKEDSKKTILESAIALEQCGVFSIVLEMVTEELAKEITEKISIPTIGIGAGRYCDGQVLVFHDIVGLNPNFKPKFSKQYANTYSIMLNALKEFKKDVKEKNFPKERHTFKGGK</sequence>
<protein>
    <recommendedName>
        <fullName evidence="1">3-methyl-2-oxobutanoate hydroxymethyltransferase</fullName>
        <ecNumber evidence="1">2.1.2.11</ecNumber>
    </recommendedName>
    <alternativeName>
        <fullName evidence="1">Ketopantoate hydroxymethyltransferase</fullName>
        <shortName evidence="1">KPHMT</shortName>
    </alternativeName>
</protein>
<evidence type="ECO:0000255" key="1">
    <source>
        <dbReference type="HAMAP-Rule" id="MF_00156"/>
    </source>
</evidence>
<gene>
    <name evidence="1" type="primary">panB</name>
    <name type="ordered locus">Tmel_1307</name>
</gene>
<keyword id="KW-0963">Cytoplasm</keyword>
<keyword id="KW-0460">Magnesium</keyword>
<keyword id="KW-0479">Metal-binding</keyword>
<keyword id="KW-0566">Pantothenate biosynthesis</keyword>
<keyword id="KW-0808">Transferase</keyword>
<accession>A6LMK5</accession>
<proteinExistence type="inferred from homology"/>
<reference key="1">
    <citation type="submission" date="2007-05" db="EMBL/GenBank/DDBJ databases">
        <title>Complete sequence of Thermosipho melanesiensis BI429.</title>
        <authorList>
            <consortium name="US DOE Joint Genome Institute"/>
            <person name="Copeland A."/>
            <person name="Lucas S."/>
            <person name="Lapidus A."/>
            <person name="Barry K."/>
            <person name="Glavina del Rio T."/>
            <person name="Dalin E."/>
            <person name="Tice H."/>
            <person name="Pitluck S."/>
            <person name="Chertkov O."/>
            <person name="Brettin T."/>
            <person name="Bruce D."/>
            <person name="Detter J.C."/>
            <person name="Han C."/>
            <person name="Schmutz J."/>
            <person name="Larimer F."/>
            <person name="Land M."/>
            <person name="Hauser L."/>
            <person name="Kyrpides N."/>
            <person name="Mikhailova N."/>
            <person name="Nelson K."/>
            <person name="Gogarten J.P."/>
            <person name="Noll K."/>
            <person name="Richardson P."/>
        </authorList>
    </citation>
    <scope>NUCLEOTIDE SEQUENCE [LARGE SCALE GENOMIC DNA]</scope>
    <source>
        <strain>DSM 12029 / CIP 104789 / BI429</strain>
    </source>
</reference>